<keyword id="KW-0903">Direct protein sequencing</keyword>
<keyword id="KW-0964">Secreted</keyword>
<proteinExistence type="evidence at protein level"/>
<protein>
    <recommendedName>
        <fullName evidence="3">Secreted acidic protein 2</fullName>
    </recommendedName>
</protein>
<dbReference type="EMBL" id="JR983041">
    <property type="status" value="NOT_ANNOTATED_CDS"/>
    <property type="molecule type" value="mRNA"/>
</dbReference>
<dbReference type="EnsemblMetazoa" id="XM_044322217.1">
    <property type="protein sequence ID" value="XP_044178152.1"/>
    <property type="gene ID" value="LOC114954713"/>
</dbReference>
<dbReference type="OrthoDB" id="10631364at2759"/>
<dbReference type="GO" id="GO:0005576">
    <property type="term" value="C:extracellular region"/>
    <property type="evidence" value="ECO:0007669"/>
    <property type="project" value="UniProtKB-SubCell"/>
</dbReference>
<comment type="subcellular location">
    <subcellularLocation>
        <location evidence="5">Secreted</location>
    </subcellularLocation>
</comment>
<comment type="tissue specificity">
    <text evidence="2">Component of the acid-insoluble and acid-soluble organic matrix of the aragonitic skeleton (at protein level).</text>
</comment>
<feature type="chain" id="PRO_0000429559" description="Secreted acidic protein 2">
    <location>
        <begin position="1" status="less than"/>
        <end position="165"/>
    </location>
</feature>
<feature type="region of interest" description="Disordered" evidence="1">
    <location>
        <begin position="1"/>
        <end position="112"/>
    </location>
</feature>
<feature type="compositionally biased region" description="Acidic residues" evidence="1">
    <location>
        <begin position="1"/>
        <end position="58"/>
    </location>
</feature>
<feature type="compositionally biased region" description="Acidic residues" evidence="1">
    <location>
        <begin position="80"/>
        <end position="102"/>
    </location>
</feature>
<feature type="compositionally biased region" description="Polar residues" evidence="1">
    <location>
        <begin position="103"/>
        <end position="112"/>
    </location>
</feature>
<feature type="non-terminal residue" evidence="4">
    <location>
        <position position="1"/>
    </location>
</feature>
<organism>
    <name type="scientific">Acropora millepora</name>
    <name type="common">Staghorn coral</name>
    <name type="synonym">Heteropora millepora</name>
    <dbReference type="NCBI Taxonomy" id="45264"/>
    <lineage>
        <taxon>Eukaryota</taxon>
        <taxon>Metazoa</taxon>
        <taxon>Cnidaria</taxon>
        <taxon>Anthozoa</taxon>
        <taxon>Hexacorallia</taxon>
        <taxon>Scleractinia</taxon>
        <taxon>Astrocoeniina</taxon>
        <taxon>Acroporidae</taxon>
        <taxon>Acropora</taxon>
    </lineage>
</organism>
<evidence type="ECO:0000256" key="1">
    <source>
        <dbReference type="SAM" id="MobiDB-lite"/>
    </source>
</evidence>
<evidence type="ECO:0000269" key="2">
    <source>
    </source>
</evidence>
<evidence type="ECO:0000303" key="3">
    <source>
    </source>
</evidence>
<evidence type="ECO:0000305" key="4"/>
<evidence type="ECO:0000305" key="5">
    <source>
    </source>
</evidence>
<sequence>WSXSGDDDDDDGDSGDDDDDDGDDDSDDDNDADDDSGAEDDNDDDSGDENEDDTDDSGDDVKMIKPTTVMTGWMMTIADESSDDDNERDDTSDDSVGDDAYNDDSQAGELNSDSTYYDQLRSQGDVQSQQGFKNLQSYSNGFKVSSGLVATVVSTLACLFLTNLH</sequence>
<reference evidence="4" key="1">
    <citation type="journal article" date="2012" name="Mol. Ecol.">
        <title>Whole transcriptome analysis of the coral Acropora millepora reveals complex responses to CO(2)-driven acidification during the initiation of calcification.</title>
        <authorList>
            <person name="Moya A."/>
            <person name="Huisman L."/>
            <person name="Ball E.E."/>
            <person name="Hayward D.C."/>
            <person name="Grasso L.C."/>
            <person name="Chua C.M."/>
            <person name="Woo H.N."/>
            <person name="Gattuso J.P."/>
            <person name="Foret S."/>
            <person name="Miller D.J."/>
        </authorList>
    </citation>
    <scope>NUCLEOTIDE SEQUENCE [MRNA]</scope>
</reference>
<reference evidence="4" key="2">
    <citation type="journal article" date="2013" name="Mol. Biol. Evol.">
        <title>The skeletal proteome of the coral Acropora millepora: the evolution of calcification by co-option and domain shuffling.</title>
        <authorList>
            <person name="Ramos-Silva P."/>
            <person name="Kaandorp J."/>
            <person name="Huisman L."/>
            <person name="Marie B."/>
            <person name="Zanella-Cleon I."/>
            <person name="Guichard N."/>
            <person name="Miller D.J."/>
            <person name="Marin F."/>
        </authorList>
    </citation>
    <scope>PROTEIN SEQUENCE OF 88-134</scope>
    <scope>TISSUE SPECIFICITY</scope>
    <scope>IDENTIFICATION BY MASS SPECTROMETRY</scope>
</reference>
<name>SAP2_ACRMI</name>
<accession>B3EWZ4</accession>